<dbReference type="EC" id="2.8.1.13" evidence="2"/>
<dbReference type="EMBL" id="AL123456">
    <property type="protein sequence ID" value="CCP45832.1"/>
    <property type="molecule type" value="Genomic_DNA"/>
</dbReference>
<dbReference type="PIR" id="C70858">
    <property type="entry name" value="C70858"/>
</dbReference>
<dbReference type="RefSeq" id="NP_217540.1">
    <property type="nucleotide sequence ID" value="NC_000962.3"/>
</dbReference>
<dbReference type="RefSeq" id="WP_003415909.1">
    <property type="nucleotide sequence ID" value="NZ_NVQJ01000011.1"/>
</dbReference>
<dbReference type="SMR" id="P9WJS5"/>
<dbReference type="FunCoup" id="P9WJS5">
    <property type="interactions" value="405"/>
</dbReference>
<dbReference type="STRING" id="83332.Rv3024c"/>
<dbReference type="PaxDb" id="83332-Rv3024c"/>
<dbReference type="DNASU" id="888524"/>
<dbReference type="GeneID" id="888524"/>
<dbReference type="KEGG" id="mtu:Rv3024c"/>
<dbReference type="KEGG" id="mtv:RVBD_3024c"/>
<dbReference type="TubercuList" id="Rv3024c"/>
<dbReference type="eggNOG" id="COG0482">
    <property type="taxonomic scope" value="Bacteria"/>
</dbReference>
<dbReference type="InParanoid" id="P9WJS5"/>
<dbReference type="OrthoDB" id="9800696at2"/>
<dbReference type="PhylomeDB" id="P9WJS5"/>
<dbReference type="Proteomes" id="UP000001584">
    <property type="component" value="Chromosome"/>
</dbReference>
<dbReference type="GO" id="GO:0005737">
    <property type="term" value="C:cytoplasm"/>
    <property type="evidence" value="ECO:0007669"/>
    <property type="project" value="UniProtKB-SubCell"/>
</dbReference>
<dbReference type="GO" id="GO:0005524">
    <property type="term" value="F:ATP binding"/>
    <property type="evidence" value="ECO:0007669"/>
    <property type="project" value="UniProtKB-KW"/>
</dbReference>
<dbReference type="GO" id="GO:0000049">
    <property type="term" value="F:tRNA binding"/>
    <property type="evidence" value="ECO:0007669"/>
    <property type="project" value="UniProtKB-KW"/>
</dbReference>
<dbReference type="GO" id="GO:0103016">
    <property type="term" value="F:tRNA-uridine 2-sulfurtransferase activity"/>
    <property type="evidence" value="ECO:0007669"/>
    <property type="project" value="UniProtKB-EC"/>
</dbReference>
<dbReference type="GO" id="GO:0002143">
    <property type="term" value="P:tRNA wobble position uridine thiolation"/>
    <property type="evidence" value="ECO:0000318"/>
    <property type="project" value="GO_Central"/>
</dbReference>
<dbReference type="CDD" id="cd01998">
    <property type="entry name" value="MnmA_TRMU-like"/>
    <property type="match status" value="1"/>
</dbReference>
<dbReference type="FunFam" id="3.40.50.620:FF:000057">
    <property type="entry name" value="tRNA-specific 2-thiouridylase MnmA"/>
    <property type="match status" value="1"/>
</dbReference>
<dbReference type="Gene3D" id="2.30.30.280">
    <property type="entry name" value="Adenine nucleotide alpha hydrolases-like domains"/>
    <property type="match status" value="1"/>
</dbReference>
<dbReference type="Gene3D" id="3.40.50.620">
    <property type="entry name" value="HUPs"/>
    <property type="match status" value="1"/>
</dbReference>
<dbReference type="Gene3D" id="2.40.30.10">
    <property type="entry name" value="Translation factors"/>
    <property type="match status" value="1"/>
</dbReference>
<dbReference type="HAMAP" id="MF_00144">
    <property type="entry name" value="tRNA_thiouridyl_MnmA"/>
    <property type="match status" value="1"/>
</dbReference>
<dbReference type="InterPro" id="IPR004506">
    <property type="entry name" value="MnmA-like"/>
</dbReference>
<dbReference type="InterPro" id="IPR046885">
    <property type="entry name" value="MnmA-like_C"/>
</dbReference>
<dbReference type="InterPro" id="IPR046884">
    <property type="entry name" value="MnmA-like_central"/>
</dbReference>
<dbReference type="InterPro" id="IPR023382">
    <property type="entry name" value="MnmA-like_central_sf"/>
</dbReference>
<dbReference type="InterPro" id="IPR014729">
    <property type="entry name" value="Rossmann-like_a/b/a_fold"/>
</dbReference>
<dbReference type="NCBIfam" id="NF001138">
    <property type="entry name" value="PRK00143.1"/>
    <property type="match status" value="1"/>
</dbReference>
<dbReference type="NCBIfam" id="TIGR00420">
    <property type="entry name" value="trmU"/>
    <property type="match status" value="1"/>
</dbReference>
<dbReference type="PANTHER" id="PTHR11933:SF5">
    <property type="entry name" value="MITOCHONDRIAL TRNA-SPECIFIC 2-THIOURIDYLASE 1"/>
    <property type="match status" value="1"/>
</dbReference>
<dbReference type="PANTHER" id="PTHR11933">
    <property type="entry name" value="TRNA 5-METHYLAMINOMETHYL-2-THIOURIDYLATE -METHYLTRANSFERASE"/>
    <property type="match status" value="1"/>
</dbReference>
<dbReference type="Pfam" id="PF03054">
    <property type="entry name" value="tRNA_Me_trans"/>
    <property type="match status" value="1"/>
</dbReference>
<dbReference type="Pfam" id="PF20258">
    <property type="entry name" value="tRNA_Me_trans_C"/>
    <property type="match status" value="1"/>
</dbReference>
<dbReference type="Pfam" id="PF20259">
    <property type="entry name" value="tRNA_Me_trans_M"/>
    <property type="match status" value="1"/>
</dbReference>
<dbReference type="SUPFAM" id="SSF52402">
    <property type="entry name" value="Adenine nucleotide alpha hydrolases-like"/>
    <property type="match status" value="1"/>
</dbReference>
<comment type="function">
    <text evidence="2">Catalyzes the 2-thiolation of uridine at the wobble position (U34) of tRNA, leading to the formation of s(2)U34.</text>
</comment>
<comment type="catalytic activity">
    <reaction evidence="2">
        <text>S-sulfanyl-L-cysteinyl-[protein] + uridine(34) in tRNA + AH2 + ATP = 2-thiouridine(34) in tRNA + L-cysteinyl-[protein] + A + AMP + diphosphate + H(+)</text>
        <dbReference type="Rhea" id="RHEA:47032"/>
        <dbReference type="Rhea" id="RHEA-COMP:10131"/>
        <dbReference type="Rhea" id="RHEA-COMP:11726"/>
        <dbReference type="Rhea" id="RHEA-COMP:11727"/>
        <dbReference type="Rhea" id="RHEA-COMP:11728"/>
        <dbReference type="ChEBI" id="CHEBI:13193"/>
        <dbReference type="ChEBI" id="CHEBI:15378"/>
        <dbReference type="ChEBI" id="CHEBI:17499"/>
        <dbReference type="ChEBI" id="CHEBI:29950"/>
        <dbReference type="ChEBI" id="CHEBI:30616"/>
        <dbReference type="ChEBI" id="CHEBI:33019"/>
        <dbReference type="ChEBI" id="CHEBI:61963"/>
        <dbReference type="ChEBI" id="CHEBI:65315"/>
        <dbReference type="ChEBI" id="CHEBI:87170"/>
        <dbReference type="ChEBI" id="CHEBI:456215"/>
        <dbReference type="EC" id="2.8.1.13"/>
    </reaction>
</comment>
<comment type="subcellular location">
    <subcellularLocation>
        <location evidence="2">Cytoplasm</location>
    </subcellularLocation>
</comment>
<comment type="similarity">
    <text evidence="2">Belongs to the MnmA/TRMU family.</text>
</comment>
<sequence length="367" mass="38120">MKVLAAMSGGVDSSVAAARMVDAGHEVVGVHMALSTAPGTLRTGSRGCCSKEDAADARRVADVLGIPFYVWDFAEKFKEDVINDFVSSYARGETPNPCVRCNQQIKFAALSARAVALGFDTVATGHYARLSGGRLRRAVDRDKDQSYVLAVLTAQQLRHAAFPIGDTPKRQIRAEAARRGLAVANKPDSHDICFIPSGNTKAFLGERIGVRRGVVVDADGVVLASHDGVHGFTIGQRRGLGIAGPGPNGRPRYVTAIDADTATVHVGDVTDLDVQTLTGRAPVFTAGAAPSGPVDCVVQVRAHGETVSAVAELIGDALFVQLHAPLRGVARGQTLVLYRPDPAGDEVLGSATIAGASGLSTGGNPGA</sequence>
<organism>
    <name type="scientific">Mycobacterium tuberculosis (strain ATCC 25618 / H37Rv)</name>
    <dbReference type="NCBI Taxonomy" id="83332"/>
    <lineage>
        <taxon>Bacteria</taxon>
        <taxon>Bacillati</taxon>
        <taxon>Actinomycetota</taxon>
        <taxon>Actinomycetes</taxon>
        <taxon>Mycobacteriales</taxon>
        <taxon>Mycobacteriaceae</taxon>
        <taxon>Mycobacterium</taxon>
        <taxon>Mycobacterium tuberculosis complex</taxon>
    </lineage>
</organism>
<gene>
    <name evidence="2" type="primary">mnmA</name>
    <name type="synonym">trmU</name>
    <name type="ordered locus">Rv3024c</name>
    <name type="ORF">MTV012.39c</name>
</gene>
<name>MNMA_MYCTU</name>
<proteinExistence type="evidence at protein level"/>
<protein>
    <recommendedName>
        <fullName evidence="2">tRNA-specific 2-thiouridylase MnmA</fullName>
        <ecNumber evidence="2">2.8.1.13</ecNumber>
    </recommendedName>
</protein>
<accession>P9WJS5</accession>
<accession>L0TBK2</accession>
<accession>O53271</accession>
<accession>P66976</accession>
<feature type="chain" id="PRO_0000121656" description="tRNA-specific 2-thiouridylase MnmA">
    <location>
        <begin position="1"/>
        <end position="367"/>
    </location>
</feature>
<feature type="region of interest" description="Interaction with tRNA" evidence="2">
    <location>
        <begin position="143"/>
        <end position="145"/>
    </location>
</feature>
<feature type="active site" description="Nucleophile" evidence="2">
    <location>
        <position position="101"/>
    </location>
</feature>
<feature type="active site" description="Cysteine persulfide intermediate" evidence="2">
    <location>
        <position position="193"/>
    </location>
</feature>
<feature type="binding site" evidence="2">
    <location>
        <begin position="6"/>
        <end position="13"/>
    </location>
    <ligand>
        <name>ATP</name>
        <dbReference type="ChEBI" id="CHEBI:30616"/>
    </ligand>
</feature>
<feature type="binding site" evidence="2">
    <location>
        <position position="32"/>
    </location>
    <ligand>
        <name>ATP</name>
        <dbReference type="ChEBI" id="CHEBI:30616"/>
    </ligand>
</feature>
<feature type="binding site" evidence="2">
    <location>
        <position position="125"/>
    </location>
    <ligand>
        <name>ATP</name>
        <dbReference type="ChEBI" id="CHEBI:30616"/>
    </ligand>
</feature>
<feature type="site" description="Interaction with tRNA" evidence="2">
    <location>
        <position position="126"/>
    </location>
</feature>
<feature type="site" description="Interaction with tRNA" evidence="2">
    <location>
        <position position="333"/>
    </location>
</feature>
<feature type="disulfide bond" evidence="1">
    <location>
        <begin position="101"/>
        <end position="193"/>
    </location>
</feature>
<reference key="1">
    <citation type="journal article" date="1998" name="Nature">
        <title>Deciphering the biology of Mycobacterium tuberculosis from the complete genome sequence.</title>
        <authorList>
            <person name="Cole S.T."/>
            <person name="Brosch R."/>
            <person name="Parkhill J."/>
            <person name="Garnier T."/>
            <person name="Churcher C.M."/>
            <person name="Harris D.E."/>
            <person name="Gordon S.V."/>
            <person name="Eiglmeier K."/>
            <person name="Gas S."/>
            <person name="Barry C.E. III"/>
            <person name="Tekaia F."/>
            <person name="Badcock K."/>
            <person name="Basham D."/>
            <person name="Brown D."/>
            <person name="Chillingworth T."/>
            <person name="Connor R."/>
            <person name="Davies R.M."/>
            <person name="Devlin K."/>
            <person name="Feltwell T."/>
            <person name="Gentles S."/>
            <person name="Hamlin N."/>
            <person name="Holroyd S."/>
            <person name="Hornsby T."/>
            <person name="Jagels K."/>
            <person name="Krogh A."/>
            <person name="McLean J."/>
            <person name="Moule S."/>
            <person name="Murphy L.D."/>
            <person name="Oliver S."/>
            <person name="Osborne J."/>
            <person name="Quail M.A."/>
            <person name="Rajandream M.A."/>
            <person name="Rogers J."/>
            <person name="Rutter S."/>
            <person name="Seeger K."/>
            <person name="Skelton S."/>
            <person name="Squares S."/>
            <person name="Squares R."/>
            <person name="Sulston J.E."/>
            <person name="Taylor K."/>
            <person name="Whitehead S."/>
            <person name="Barrell B.G."/>
        </authorList>
    </citation>
    <scope>NUCLEOTIDE SEQUENCE [LARGE SCALE GENOMIC DNA]</scope>
    <source>
        <strain>ATCC 25618 / H37Rv</strain>
    </source>
</reference>
<reference key="2">
    <citation type="journal article" date="2011" name="Mol. Cell. Proteomics">
        <title>Proteogenomic analysis of Mycobacterium tuberculosis by high resolution mass spectrometry.</title>
        <authorList>
            <person name="Kelkar D.S."/>
            <person name="Kumar D."/>
            <person name="Kumar P."/>
            <person name="Balakrishnan L."/>
            <person name="Muthusamy B."/>
            <person name="Yadav A.K."/>
            <person name="Shrivastava P."/>
            <person name="Marimuthu A."/>
            <person name="Anand S."/>
            <person name="Sundaram H."/>
            <person name="Kingsbury R."/>
            <person name="Harsha H.C."/>
            <person name="Nair B."/>
            <person name="Prasad T.S."/>
            <person name="Chauhan D.S."/>
            <person name="Katoch K."/>
            <person name="Katoch V.M."/>
            <person name="Kumar P."/>
            <person name="Chaerkady R."/>
            <person name="Ramachandran S."/>
            <person name="Dash D."/>
            <person name="Pandey A."/>
        </authorList>
    </citation>
    <scope>IDENTIFICATION BY MASS SPECTROMETRY [LARGE SCALE ANALYSIS]</scope>
    <source>
        <strain>ATCC 25618 / H37Rv</strain>
    </source>
</reference>
<evidence type="ECO:0000250" key="1"/>
<evidence type="ECO:0000255" key="2">
    <source>
        <dbReference type="HAMAP-Rule" id="MF_00144"/>
    </source>
</evidence>
<keyword id="KW-0067">ATP-binding</keyword>
<keyword id="KW-0963">Cytoplasm</keyword>
<keyword id="KW-1015">Disulfide bond</keyword>
<keyword id="KW-0547">Nucleotide-binding</keyword>
<keyword id="KW-1185">Reference proteome</keyword>
<keyword id="KW-0694">RNA-binding</keyword>
<keyword id="KW-0808">Transferase</keyword>
<keyword id="KW-0819">tRNA processing</keyword>
<keyword id="KW-0820">tRNA-binding</keyword>